<evidence type="ECO:0000250" key="1">
    <source>
        <dbReference type="UniProtKB" id="Q9ULF5"/>
    </source>
</evidence>
<evidence type="ECO:0000255" key="2"/>
<evidence type="ECO:0000256" key="3">
    <source>
        <dbReference type="SAM" id="MobiDB-lite"/>
    </source>
</evidence>
<evidence type="ECO:0000269" key="4">
    <source>
    </source>
</evidence>
<evidence type="ECO:0000269" key="5">
    <source>
    </source>
</evidence>
<evidence type="ECO:0000269" key="6">
    <source>
    </source>
</evidence>
<evidence type="ECO:0000269" key="7">
    <source>
    </source>
</evidence>
<evidence type="ECO:0000269" key="8">
    <source>
    </source>
</evidence>
<evidence type="ECO:0000269" key="9">
    <source>
    </source>
</evidence>
<evidence type="ECO:0000269" key="10">
    <source>
    </source>
</evidence>
<evidence type="ECO:0000305" key="11"/>
<evidence type="ECO:0000312" key="12">
    <source>
        <dbReference type="MGI" id="MGI:1914515"/>
    </source>
</evidence>
<protein>
    <recommendedName>
        <fullName evidence="11">Zinc transporter ZIP10</fullName>
    </recommendedName>
    <alternativeName>
        <fullName>Solute carrier family 39 member 10</fullName>
    </alternativeName>
    <alternativeName>
        <fullName>Zrt- and Irt-like protein 10</fullName>
        <shortName>ZIP-10</shortName>
    </alternativeName>
</protein>
<keyword id="KW-1003">Cell membrane</keyword>
<keyword id="KW-0325">Glycoprotein</keyword>
<keyword id="KW-0406">Ion transport</keyword>
<keyword id="KW-0472">Membrane</keyword>
<keyword id="KW-0597">Phosphoprotein</keyword>
<keyword id="KW-1185">Reference proteome</keyword>
<keyword id="KW-0732">Signal</keyword>
<keyword id="KW-0812">Transmembrane</keyword>
<keyword id="KW-1133">Transmembrane helix</keyword>
<keyword id="KW-0813">Transport</keyword>
<keyword id="KW-0862">Zinc</keyword>
<keyword id="KW-0864">Zinc transport</keyword>
<gene>
    <name evidence="12" type="primary">Slc39a10</name>
    <name type="synonym">Kiaa1265</name>
    <name type="synonym">Zip10</name>
</gene>
<feature type="signal peptide" evidence="2">
    <location>
        <begin position="1"/>
        <end position="25"/>
    </location>
</feature>
<feature type="chain" id="PRO_0000297633" description="Zinc transporter ZIP10">
    <location>
        <begin position="26"/>
        <end position="833"/>
    </location>
</feature>
<feature type="transmembrane region" description="Helical" evidence="2">
    <location>
        <begin position="413"/>
        <end position="433"/>
    </location>
</feature>
<feature type="transmembrane region" description="Helical" evidence="2">
    <location>
        <begin position="440"/>
        <end position="460"/>
    </location>
</feature>
<feature type="transmembrane region" description="Helical" evidence="2">
    <location>
        <begin position="497"/>
        <end position="517"/>
    </location>
</feature>
<feature type="transmembrane region" description="Helical" evidence="2">
    <location>
        <begin position="689"/>
        <end position="709"/>
    </location>
</feature>
<feature type="transmembrane region" description="Helical" evidence="2">
    <location>
        <begin position="734"/>
        <end position="754"/>
    </location>
</feature>
<feature type="transmembrane region" description="Helical" evidence="2">
    <location>
        <begin position="761"/>
        <end position="781"/>
    </location>
</feature>
<feature type="transmembrane region" description="Helical" evidence="2">
    <location>
        <begin position="803"/>
        <end position="823"/>
    </location>
</feature>
<feature type="region of interest" description="Disordered" evidence="3">
    <location>
        <begin position="30"/>
        <end position="54"/>
    </location>
</feature>
<feature type="region of interest" description="Disordered" evidence="3">
    <location>
        <begin position="137"/>
        <end position="167"/>
    </location>
</feature>
<feature type="region of interest" description="Disordered" evidence="3">
    <location>
        <begin position="200"/>
        <end position="257"/>
    </location>
</feature>
<feature type="region of interest" description="Disordered" evidence="3">
    <location>
        <begin position="271"/>
        <end position="335"/>
    </location>
</feature>
<feature type="region of interest" description="Disordered" evidence="3">
    <location>
        <begin position="466"/>
        <end position="485"/>
    </location>
</feature>
<feature type="compositionally biased region" description="Basic and acidic residues" evidence="3">
    <location>
        <begin position="30"/>
        <end position="48"/>
    </location>
</feature>
<feature type="compositionally biased region" description="Polar residues" evidence="3">
    <location>
        <begin position="137"/>
        <end position="147"/>
    </location>
</feature>
<feature type="compositionally biased region" description="Basic and acidic residues" evidence="3">
    <location>
        <begin position="152"/>
        <end position="167"/>
    </location>
</feature>
<feature type="compositionally biased region" description="Basic and acidic residues" evidence="3">
    <location>
        <begin position="200"/>
        <end position="209"/>
    </location>
</feature>
<feature type="compositionally biased region" description="Basic residues" evidence="3">
    <location>
        <begin position="229"/>
        <end position="241"/>
    </location>
</feature>
<feature type="compositionally biased region" description="Basic and acidic residues" evidence="3">
    <location>
        <begin position="281"/>
        <end position="315"/>
    </location>
</feature>
<feature type="compositionally biased region" description="Basic and acidic residues" evidence="3">
    <location>
        <begin position="326"/>
        <end position="335"/>
    </location>
</feature>
<feature type="modified residue" description="Phosphothreonine" evidence="1">
    <location>
        <position position="538"/>
    </location>
</feature>
<feature type="modified residue" description="Phosphothreonine" evidence="1">
    <location>
        <position position="555"/>
    </location>
</feature>
<feature type="modified residue" description="Phosphoserine" evidence="1">
    <location>
        <position position="593"/>
    </location>
</feature>
<feature type="glycosylation site" description="N-linked (GlcNAc...) asparagine" evidence="2">
    <location>
        <position position="191"/>
    </location>
</feature>
<feature type="glycosylation site" description="N-linked (GlcNAc...) asparagine" evidence="4 5">
    <location>
        <position position="198"/>
    </location>
</feature>
<feature type="glycosylation site" description="N-linked (GlcNAc...) asparagine" evidence="4 5">
    <location>
        <position position="218"/>
    </location>
</feature>
<feature type="glycosylation site" description="N-linked (GlcNAc...) asparagine" evidence="4">
    <location>
        <position position="341"/>
    </location>
</feature>
<feature type="sequence conflict" description="In Ref. 2; BAC65765." evidence="11" ref="2">
    <original>L</original>
    <variation>S</variation>
    <location>
        <position position="346"/>
    </location>
</feature>
<feature type="sequence conflict" description="In Ref. 3; BAC27077." evidence="11" ref="3">
    <original>I</original>
    <variation>F</variation>
    <location>
        <position position="676"/>
    </location>
</feature>
<feature type="sequence conflict" description="In Ref. 2; BAC65765." evidence="11" ref="2">
    <original>F</original>
    <variation>Y</variation>
    <location>
        <position position="829"/>
    </location>
</feature>
<name>S39AA_MOUSE</name>
<comment type="function">
    <text evidence="1 7 9">Zinc-influx transporter. When associated with SLC39A6, the heterodimer formed by SLC39A10 and SLC39A6 mediates cellular zinc uptake to trigger cells to undergo epithelial-to-mesenchymal transition (EMT). mediates cellular zinc uptake to trigger cells to undergo epithelial-to-mesenchymal transition (EMT). SLC39A10-SLC39A6 heterodimers play also an essentiel role in initiating mitosis by importing zinc into cells to initiate a pathway resulting in the onset of mitosis (By similarity). Plays an important for both mature B-cell maintenance and humoral immune responses (PubMed:25074919). When associated with SLC39A10, the heterodimer controls NCAM1 phosphorylation and integration into focal adhesion complexes during EMT (PubMed:28098160).</text>
</comment>
<comment type="catalytic activity">
    <reaction evidence="1">
        <text>Zn(2+)(in) = Zn(2+)(out)</text>
        <dbReference type="Rhea" id="RHEA:29351"/>
        <dbReference type="ChEBI" id="CHEBI:29105"/>
    </reaction>
    <physiologicalReaction direction="right-to-left" evidence="1">
        <dbReference type="Rhea" id="RHEA:29353"/>
    </physiologicalReaction>
</comment>
<comment type="subunit">
    <text evidence="1 8 9">Interacts with SLC39A6 (PubMed:27274087). This interaction triggers cells to undergo EMT and mitosis (By similarity). Found in a complex with SLC39A6, SLC39A10 and with the 'Ser-727' phosphorylated form of STAT3 throughout mitosis (By similarity). Found in a complex with SLC39A6, SLC39A10 and with NCAM1; this complex controls NCAM1 phosphorylation and integration into focal adhesion complexes during epithelial-tomesenchymal transition (PubMed:28098160). Found in a complex with SLC39A6, SLC39A10 and with GSK3B that controls NCAM1 phosphorylation (PubMed:28098160).</text>
</comment>
<comment type="subcellular location">
    <subcellularLocation>
        <location evidence="6 7">Cell membrane</location>
        <topology evidence="11">Multi-pass membrane protein</topology>
    </subcellularLocation>
    <subcellularLocation>
        <location evidence="10">Apical cell membrane</location>
        <topology evidence="2">Multi-pass membrane protein</topology>
    </subcellularLocation>
    <text evidence="10">Expressed at the apical membranes of proximal tubules in the kidney.</text>
</comment>
<comment type="tissue specificity">
    <text evidence="6 10">Expressed in the liver, kidney and brain.</text>
</comment>
<comment type="induction">
    <text evidence="6">Greatly increased in liver and brain, in response to Zn(2+) deficiency (at protein level).</text>
</comment>
<comment type="PTM">
    <text evidence="1">Undergoes N-terminal ectodomain shedding.</text>
</comment>
<comment type="similarity">
    <text evidence="11">Belongs to the ZIP transporter (TC 2.A.5) family.</text>
</comment>
<comment type="sequence caution" evidence="11">
    <conflict type="erroneous initiation">
        <sequence resource="EMBL-CDS" id="AAH59214"/>
    </conflict>
    <text>Truncated N-terminus.</text>
</comment>
<comment type="sequence caution" evidence="11">
    <conflict type="erroneous initiation">
        <sequence resource="EMBL-CDS" id="BAC33542"/>
    </conflict>
    <text>Truncated N-terminus.</text>
</comment>
<reference key="1">
    <citation type="journal article" date="2004" name="Genome Res.">
        <title>The status, quality, and expansion of the NIH full-length cDNA project: the Mammalian Gene Collection (MGC).</title>
        <authorList>
            <consortium name="The MGC Project Team"/>
        </authorList>
    </citation>
    <scope>NUCLEOTIDE SEQUENCE [LARGE SCALE MRNA]</scope>
    <source>
        <strain>C57BL/6J</strain>
        <tissue>Brain</tissue>
        <tissue>Egg</tissue>
    </source>
</reference>
<reference key="2">
    <citation type="journal article" date="2003" name="DNA Res.">
        <title>Prediction of the coding sequences of mouse homologues of KIAA gene: II. The complete nucleotide sequences of 400 mouse KIAA-homologous cDNAs identified by screening of terminal sequences of cDNA clones randomly sampled from size-fractionated libraries.</title>
        <authorList>
            <person name="Okazaki N."/>
            <person name="Kikuno R."/>
            <person name="Ohara R."/>
            <person name="Inamoto S."/>
            <person name="Aizawa H."/>
            <person name="Yuasa S."/>
            <person name="Nakajima D."/>
            <person name="Nagase T."/>
            <person name="Ohara O."/>
            <person name="Koga H."/>
        </authorList>
    </citation>
    <scope>NUCLEOTIDE SEQUENCE [LARGE SCALE MRNA] OF 173-833</scope>
    <source>
        <tissue>Brain</tissue>
    </source>
</reference>
<reference key="3">
    <citation type="journal article" date="2005" name="Science">
        <title>The transcriptional landscape of the mammalian genome.</title>
        <authorList>
            <person name="Carninci P."/>
            <person name="Kasukawa T."/>
            <person name="Katayama S."/>
            <person name="Gough J."/>
            <person name="Frith M.C."/>
            <person name="Maeda N."/>
            <person name="Oyama R."/>
            <person name="Ravasi T."/>
            <person name="Lenhard B."/>
            <person name="Wells C."/>
            <person name="Kodzius R."/>
            <person name="Shimokawa K."/>
            <person name="Bajic V.B."/>
            <person name="Brenner S.E."/>
            <person name="Batalov S."/>
            <person name="Forrest A.R."/>
            <person name="Zavolan M."/>
            <person name="Davis M.J."/>
            <person name="Wilming L.G."/>
            <person name="Aidinis V."/>
            <person name="Allen J.E."/>
            <person name="Ambesi-Impiombato A."/>
            <person name="Apweiler R."/>
            <person name="Aturaliya R.N."/>
            <person name="Bailey T.L."/>
            <person name="Bansal M."/>
            <person name="Baxter L."/>
            <person name="Beisel K.W."/>
            <person name="Bersano T."/>
            <person name="Bono H."/>
            <person name="Chalk A.M."/>
            <person name="Chiu K.P."/>
            <person name="Choudhary V."/>
            <person name="Christoffels A."/>
            <person name="Clutterbuck D.R."/>
            <person name="Crowe M.L."/>
            <person name="Dalla E."/>
            <person name="Dalrymple B.P."/>
            <person name="de Bono B."/>
            <person name="Della Gatta G."/>
            <person name="di Bernardo D."/>
            <person name="Down T."/>
            <person name="Engstrom P."/>
            <person name="Fagiolini M."/>
            <person name="Faulkner G."/>
            <person name="Fletcher C.F."/>
            <person name="Fukushima T."/>
            <person name="Furuno M."/>
            <person name="Futaki S."/>
            <person name="Gariboldi M."/>
            <person name="Georgii-Hemming P."/>
            <person name="Gingeras T.R."/>
            <person name="Gojobori T."/>
            <person name="Green R.E."/>
            <person name="Gustincich S."/>
            <person name="Harbers M."/>
            <person name="Hayashi Y."/>
            <person name="Hensch T.K."/>
            <person name="Hirokawa N."/>
            <person name="Hill D."/>
            <person name="Huminiecki L."/>
            <person name="Iacono M."/>
            <person name="Ikeo K."/>
            <person name="Iwama A."/>
            <person name="Ishikawa T."/>
            <person name="Jakt M."/>
            <person name="Kanapin A."/>
            <person name="Katoh M."/>
            <person name="Kawasawa Y."/>
            <person name="Kelso J."/>
            <person name="Kitamura H."/>
            <person name="Kitano H."/>
            <person name="Kollias G."/>
            <person name="Krishnan S.P."/>
            <person name="Kruger A."/>
            <person name="Kummerfeld S.K."/>
            <person name="Kurochkin I.V."/>
            <person name="Lareau L.F."/>
            <person name="Lazarevic D."/>
            <person name="Lipovich L."/>
            <person name="Liu J."/>
            <person name="Liuni S."/>
            <person name="McWilliam S."/>
            <person name="Madan Babu M."/>
            <person name="Madera M."/>
            <person name="Marchionni L."/>
            <person name="Matsuda H."/>
            <person name="Matsuzawa S."/>
            <person name="Miki H."/>
            <person name="Mignone F."/>
            <person name="Miyake S."/>
            <person name="Morris K."/>
            <person name="Mottagui-Tabar S."/>
            <person name="Mulder N."/>
            <person name="Nakano N."/>
            <person name="Nakauchi H."/>
            <person name="Ng P."/>
            <person name="Nilsson R."/>
            <person name="Nishiguchi S."/>
            <person name="Nishikawa S."/>
            <person name="Nori F."/>
            <person name="Ohara O."/>
            <person name="Okazaki Y."/>
            <person name="Orlando V."/>
            <person name="Pang K.C."/>
            <person name="Pavan W.J."/>
            <person name="Pavesi G."/>
            <person name="Pesole G."/>
            <person name="Petrovsky N."/>
            <person name="Piazza S."/>
            <person name="Reed J."/>
            <person name="Reid J.F."/>
            <person name="Ring B.Z."/>
            <person name="Ringwald M."/>
            <person name="Rost B."/>
            <person name="Ruan Y."/>
            <person name="Salzberg S.L."/>
            <person name="Sandelin A."/>
            <person name="Schneider C."/>
            <person name="Schoenbach C."/>
            <person name="Sekiguchi K."/>
            <person name="Semple C.A."/>
            <person name="Seno S."/>
            <person name="Sessa L."/>
            <person name="Sheng Y."/>
            <person name="Shibata Y."/>
            <person name="Shimada H."/>
            <person name="Shimada K."/>
            <person name="Silva D."/>
            <person name="Sinclair B."/>
            <person name="Sperling S."/>
            <person name="Stupka E."/>
            <person name="Sugiura K."/>
            <person name="Sultana R."/>
            <person name="Takenaka Y."/>
            <person name="Taki K."/>
            <person name="Tammoja K."/>
            <person name="Tan S.L."/>
            <person name="Tang S."/>
            <person name="Taylor M.S."/>
            <person name="Tegner J."/>
            <person name="Teichmann S.A."/>
            <person name="Ueda H.R."/>
            <person name="van Nimwegen E."/>
            <person name="Verardo R."/>
            <person name="Wei C.L."/>
            <person name="Yagi K."/>
            <person name="Yamanishi H."/>
            <person name="Zabarovsky E."/>
            <person name="Zhu S."/>
            <person name="Zimmer A."/>
            <person name="Hide W."/>
            <person name="Bult C."/>
            <person name="Grimmond S.M."/>
            <person name="Teasdale R.D."/>
            <person name="Liu E.T."/>
            <person name="Brusic V."/>
            <person name="Quackenbush J."/>
            <person name="Wahlestedt C."/>
            <person name="Mattick J.S."/>
            <person name="Hume D.A."/>
            <person name="Kai C."/>
            <person name="Sasaki D."/>
            <person name="Tomaru Y."/>
            <person name="Fukuda S."/>
            <person name="Kanamori-Katayama M."/>
            <person name="Suzuki M."/>
            <person name="Aoki J."/>
            <person name="Arakawa T."/>
            <person name="Iida J."/>
            <person name="Imamura K."/>
            <person name="Itoh M."/>
            <person name="Kato T."/>
            <person name="Kawaji H."/>
            <person name="Kawagashira N."/>
            <person name="Kawashima T."/>
            <person name="Kojima M."/>
            <person name="Kondo S."/>
            <person name="Konno H."/>
            <person name="Nakano K."/>
            <person name="Ninomiya N."/>
            <person name="Nishio T."/>
            <person name="Okada M."/>
            <person name="Plessy C."/>
            <person name="Shibata K."/>
            <person name="Shiraki T."/>
            <person name="Suzuki S."/>
            <person name="Tagami M."/>
            <person name="Waki K."/>
            <person name="Watahiki A."/>
            <person name="Okamura-Oho Y."/>
            <person name="Suzuki H."/>
            <person name="Kawai J."/>
            <person name="Hayashizaki Y."/>
        </authorList>
    </citation>
    <scope>NUCLEOTIDE SEQUENCE [LARGE SCALE MRNA] OF 403-833</scope>
    <source>
        <strain>C57BL/6J</strain>
        <tissue>Cerebellum</tissue>
        <tissue>Head</tissue>
    </source>
</reference>
<reference key="4">
    <citation type="journal article" date="2009" name="Immunity">
        <title>The phagosomal proteome in interferon-gamma-activated macrophages.</title>
        <authorList>
            <person name="Trost M."/>
            <person name="English L."/>
            <person name="Lemieux S."/>
            <person name="Courcelles M."/>
            <person name="Desjardins M."/>
            <person name="Thibault P."/>
        </authorList>
    </citation>
    <scope>IDENTIFICATION BY MASS SPECTROMETRY [LARGE SCALE ANALYSIS]</scope>
</reference>
<reference key="5">
    <citation type="journal article" date="2009" name="Mol. Cell. Proteomics">
        <title>The mouse C2C12 myoblast cell surface N-linked glycoproteome: identification, glycosite occupancy, and membrane orientation.</title>
        <authorList>
            <person name="Gundry R.L."/>
            <person name="Raginski K."/>
            <person name="Tarasova Y."/>
            <person name="Tchernyshyov I."/>
            <person name="Bausch-Fluck D."/>
            <person name="Elliott S.T."/>
            <person name="Boheler K.R."/>
            <person name="Van Eyk J.E."/>
            <person name="Wollscheid B."/>
        </authorList>
    </citation>
    <scope>GLYCOSYLATION [LARGE SCALE ANALYSIS] AT ASN-198 AND ASN-218</scope>
    <source>
        <tissue>Myoblast</tissue>
    </source>
</reference>
<reference key="6">
    <citation type="journal article" date="2009" name="Nat. Biotechnol.">
        <title>Mass-spectrometric identification and relative quantification of N-linked cell surface glycoproteins.</title>
        <authorList>
            <person name="Wollscheid B."/>
            <person name="Bausch-Fluck D."/>
            <person name="Henderson C."/>
            <person name="O'Brien R."/>
            <person name="Bibel M."/>
            <person name="Schiess R."/>
            <person name="Aebersold R."/>
            <person name="Watts J.D."/>
        </authorList>
    </citation>
    <scope>GLYCOSYLATION [LARGE SCALE ANALYSIS] AT ASN-198; ASN-218 AND ASN-341</scope>
</reference>
<reference key="7">
    <citation type="journal article" date="2010" name="Cell">
        <title>A tissue-specific atlas of mouse protein phosphorylation and expression.</title>
        <authorList>
            <person name="Huttlin E.L."/>
            <person name="Jedrychowski M.P."/>
            <person name="Elias J.E."/>
            <person name="Goswami T."/>
            <person name="Rad R."/>
            <person name="Beausoleil S.A."/>
            <person name="Villen J."/>
            <person name="Haas W."/>
            <person name="Sowa M.E."/>
            <person name="Gygi S.P."/>
        </authorList>
    </citation>
    <scope>IDENTIFICATION BY MASS SPECTROMETRY [LARGE SCALE ANALYSIS]</scope>
    <source>
        <tissue>Brain</tissue>
    </source>
</reference>
<reference key="8">
    <citation type="journal article" date="2011" name="PLoS ONE">
        <title>MTF-1-mediated repression of the zinc transporter Zip10 is alleviated by zinc restriction.</title>
        <authorList>
            <person name="Lichten L.A."/>
            <person name="Ryu M.S."/>
            <person name="Guo L."/>
            <person name="Embury J."/>
            <person name="Cousins R.J."/>
        </authorList>
    </citation>
    <scope>SUBCELLULAR LOCATION</scope>
    <scope>TISSUE SPECIFICITY</scope>
    <scope>INDUCTION</scope>
</reference>
<reference key="9">
    <citation type="journal article" date="2014" name="Proc. Natl. Acad. Sci. U.S.A.">
        <title>Zinc transporter SLC39A10/ZIP10 controls humoral immunity by modulating B-cell receptor signal strength.</title>
        <authorList>
            <person name="Hojyo S."/>
            <person name="Miyai T."/>
            <person name="Fujishiro H."/>
            <person name="Kawamura M."/>
            <person name="Yasuda T."/>
            <person name="Hijikata A."/>
            <person name="Bin B.H."/>
            <person name="Irie T."/>
            <person name="Tanaka J."/>
            <person name="Atsumi T."/>
            <person name="Murakami M."/>
            <person name="Nakayama M."/>
            <person name="Ohara O."/>
            <person name="Himeno S."/>
            <person name="Yoshida H."/>
            <person name="Koseki H."/>
            <person name="Ikawa T."/>
            <person name="Mishima K."/>
            <person name="Fukada T."/>
        </authorList>
    </citation>
    <scope>SUBCELLULAR LOCATION</scope>
    <scope>FUNCTION</scope>
</reference>
<reference key="10">
    <citation type="journal article" date="2016" name="Biochem. J.">
        <title>Zinc transporter ZIP10 forms a heteromer with ZIP6 which regulates embryonic development and cell migration.</title>
        <authorList>
            <person name="Taylor K.M."/>
            <person name="Muraina I.A."/>
            <person name="Brethour D."/>
            <person name="Schmitt-Ulms G."/>
            <person name="Nimmanon T."/>
            <person name="Ziliotto S."/>
            <person name="Kille P."/>
            <person name="Hogstrand C."/>
        </authorList>
    </citation>
    <scope>INTERACTION WITH SLC39A6</scope>
</reference>
<reference key="11">
    <citation type="journal article" date="2017" name="Sci. Rep.">
        <title>A ZIP6-ZIP10 heteromer controls NCAM1 phosphorylation and integration into focal adhesion complexes during epithelial-to-mesenchymal transition.</title>
        <authorList>
            <person name="Brethour D."/>
            <person name="Mehrabian M."/>
            <person name="Williams D."/>
            <person name="Wang X."/>
            <person name="Ghodrati F."/>
            <person name="Ehsani S."/>
            <person name="Rubie E.A."/>
            <person name="Woodgett J.R."/>
            <person name="Sevalle J."/>
            <person name="Xi Z."/>
            <person name="Rogaeva E."/>
            <person name="Schmitt-Ulms G."/>
        </authorList>
    </citation>
    <scope>FUNCTION</scope>
    <scope>IDENTIFICATION IN A COMPLEX WITH SLC39A6 AND NCAM1</scope>
    <scope>IDENTIFICATION IN A COMPLEX WITH SLC39A6 AND GSK3B</scope>
</reference>
<reference key="12">
    <citation type="journal article" date="2019" name="Am. J. Physiol.">
        <title>Cloning, function, and localization of human, canine, and Drosophila ZIP10 (SLC39A10), a Zn2+ transporter.</title>
        <authorList>
            <person name="Landry G.M."/>
            <person name="Furrow E."/>
            <person name="Holmes H.L."/>
            <person name="Hirata T."/>
            <person name="Kato A."/>
            <person name="Williams P."/>
            <person name="Strohmaier K."/>
            <person name="Gallo C.J.R."/>
            <person name="Chang M."/>
            <person name="Pandey M.K."/>
            <person name="Jiang H."/>
            <person name="Bansal A."/>
            <person name="Franz M.C."/>
            <person name="Montalbetti N."/>
            <person name="Alexander M.P."/>
            <person name="Cabrero P."/>
            <person name="Dow J.A.T."/>
            <person name="DeGrado T.R."/>
            <person name="Romero M.F."/>
        </authorList>
    </citation>
    <scope>SUBCELLULAR LOCATION</scope>
    <scope>TISSUE SPECIFICITY</scope>
</reference>
<organism>
    <name type="scientific">Mus musculus</name>
    <name type="common">Mouse</name>
    <dbReference type="NCBI Taxonomy" id="10090"/>
    <lineage>
        <taxon>Eukaryota</taxon>
        <taxon>Metazoa</taxon>
        <taxon>Chordata</taxon>
        <taxon>Craniata</taxon>
        <taxon>Vertebrata</taxon>
        <taxon>Euteleostomi</taxon>
        <taxon>Mammalia</taxon>
        <taxon>Eutheria</taxon>
        <taxon>Euarchontoglires</taxon>
        <taxon>Glires</taxon>
        <taxon>Rodentia</taxon>
        <taxon>Myomorpha</taxon>
        <taxon>Muroidea</taxon>
        <taxon>Muridae</taxon>
        <taxon>Murinae</taxon>
        <taxon>Mus</taxon>
        <taxon>Mus</taxon>
    </lineage>
</organism>
<proteinExistence type="evidence at protein level"/>
<accession>Q6P5F6</accession>
<accession>Q80TG2</accession>
<accession>Q8BX42</accession>
<accession>Q8C0L2</accession>
<sequence length="833" mass="94394">MKVHIHTKFCLICLLTFIFHHCNHCHEDHDHGPEELHRHHRGMTESESSKFSVQDAENEKKYYIEKLFDRYGENGRLSFFGLEKLLTNLGLGEIKVVEINHEDLGHDHVSHLDILAVQEGKHFHSHTHQHFHNHLNAENHTTTSVTSKRNHKCDPEKEAAELPIKADDKHLHDRNHRFHHRHRLHHHLDHNTTRHVHNDSVAHSEHGEPGHSPSPETNKTQEQSEVKSVKVRRKEKGKRKKENSEVNTPGFLPNHDHSEQYEHNRVHKLDRVHSPGHPHAHLPEHSGHELGHGHQELDPDNEGELRHTRKREAPHVRKSAIYSTPSHKDQSEDDRQHECLNVTQLLKHFGLGPNSPISPDLFTYLCPALLYQIDSRLCIEHFDKLLVEDLNKDKTLVPEDKTNIGASAWICGIISITVISLLSLLGVILVPIINQGCFKFLLTFLVALAVGTMSGDALLHLLPHSQGGHDHSHQHTHGHGHSHGHESKEFLEEYDAVLKGLVALGGIYLLFIIEHCIRMFKHYKQQRGKQKWFMKQSTEESTIGRKLSDHKLNSTPDADWLQLKPLAGTDDSVVSEDRLNETELTDLEAQQESPPKNYLGVEEEKIMDHSHSDGLHTIHEHEVHVTSHNHHDEDKAVLRKHSHQWHHRHAHHSHGPCHSGSDLKETGIANIAWMVIMGDGIHNFSDGLAIGAAFSAGLTGGISTSIAVFCHELPHELGDFAVLLKAGMTVKQAIVYNLLSAMMAYIGMLIGTAVGQYANNITLWIFAITAGMFLYVALVDMLPEMLHGDGDHEEHGFCPVGQFILQNLGLLFGFAIMLVIALYEDKIVFDIQF</sequence>
<dbReference type="EMBL" id="BC052880">
    <property type="protein sequence ID" value="AAH52880.1"/>
    <property type="molecule type" value="mRNA"/>
</dbReference>
<dbReference type="EMBL" id="BC059214">
    <property type="protein sequence ID" value="AAH59214.1"/>
    <property type="status" value="ALT_INIT"/>
    <property type="molecule type" value="mRNA"/>
</dbReference>
<dbReference type="EMBL" id="BC062918">
    <property type="protein sequence ID" value="AAH62918.1"/>
    <property type="molecule type" value="mRNA"/>
</dbReference>
<dbReference type="EMBL" id="AK122483">
    <property type="protein sequence ID" value="BAC65765.1"/>
    <property type="molecule type" value="mRNA"/>
</dbReference>
<dbReference type="EMBL" id="AK030685">
    <property type="protein sequence ID" value="BAC27077.1"/>
    <property type="molecule type" value="mRNA"/>
</dbReference>
<dbReference type="EMBL" id="AK049099">
    <property type="protein sequence ID" value="BAC33542.1"/>
    <property type="status" value="ALT_INIT"/>
    <property type="molecule type" value="mRNA"/>
</dbReference>
<dbReference type="CCDS" id="CCDS14936.1"/>
<dbReference type="RefSeq" id="NP_001343345.1">
    <property type="nucleotide sequence ID" value="NM_001356416.1"/>
</dbReference>
<dbReference type="RefSeq" id="NP_001343346.1">
    <property type="nucleotide sequence ID" value="NM_001356417.1"/>
</dbReference>
<dbReference type="RefSeq" id="NP_766241.2">
    <property type="nucleotide sequence ID" value="NM_172653.2"/>
</dbReference>
<dbReference type="RefSeq" id="XP_006495996.1">
    <property type="nucleotide sequence ID" value="XM_006495933.5"/>
</dbReference>
<dbReference type="RefSeq" id="XP_006495997.1">
    <property type="nucleotide sequence ID" value="XM_006495934.3"/>
</dbReference>
<dbReference type="RefSeq" id="XP_006495998.1">
    <property type="nucleotide sequence ID" value="XM_006495935.2"/>
</dbReference>
<dbReference type="RefSeq" id="XP_036020270.1">
    <property type="nucleotide sequence ID" value="XM_036164377.1"/>
</dbReference>
<dbReference type="SMR" id="Q6P5F6"/>
<dbReference type="BioGRID" id="230584">
    <property type="interactions" value="3"/>
</dbReference>
<dbReference type="FunCoup" id="Q6P5F6">
    <property type="interactions" value="1630"/>
</dbReference>
<dbReference type="STRING" id="10090.ENSMUSP00000027131"/>
<dbReference type="GlyConnect" id="2830">
    <property type="glycosylation" value="8 N-Linked glycans (2 sites)"/>
</dbReference>
<dbReference type="GlyCosmos" id="Q6P5F6">
    <property type="glycosylation" value="4 sites, 8 glycans"/>
</dbReference>
<dbReference type="GlyGen" id="Q6P5F6">
    <property type="glycosylation" value="7 sites, 13 N-linked glycans (5 sites), 1 O-linked glycan (1 site)"/>
</dbReference>
<dbReference type="iPTMnet" id="Q6P5F6"/>
<dbReference type="PhosphoSitePlus" id="Q6P5F6"/>
<dbReference type="SwissPalm" id="Q6P5F6"/>
<dbReference type="PaxDb" id="10090-ENSMUSP00000027131"/>
<dbReference type="PeptideAtlas" id="Q6P5F6"/>
<dbReference type="ProteomicsDB" id="256899"/>
<dbReference type="Pumba" id="Q6P5F6"/>
<dbReference type="Antibodypedia" id="34052">
    <property type="antibodies" value="129 antibodies from 27 providers"/>
</dbReference>
<dbReference type="DNASU" id="227059"/>
<dbReference type="Ensembl" id="ENSMUST00000027131.6">
    <property type="protein sequence ID" value="ENSMUSP00000027131.5"/>
    <property type="gene ID" value="ENSMUSG00000025986.7"/>
</dbReference>
<dbReference type="GeneID" id="227059"/>
<dbReference type="KEGG" id="mmu:227059"/>
<dbReference type="UCSC" id="uc007axc.1">
    <property type="organism name" value="mouse"/>
</dbReference>
<dbReference type="AGR" id="MGI:1914515"/>
<dbReference type="CTD" id="57181"/>
<dbReference type="MGI" id="MGI:1914515">
    <property type="gene designation" value="Slc39a10"/>
</dbReference>
<dbReference type="VEuPathDB" id="HostDB:ENSMUSG00000025986"/>
<dbReference type="eggNOG" id="KOG2693">
    <property type="taxonomic scope" value="Eukaryota"/>
</dbReference>
<dbReference type="GeneTree" id="ENSGT00940000160335"/>
<dbReference type="HOGENOM" id="CLU_015114_13_2_1"/>
<dbReference type="InParanoid" id="Q6P5F6"/>
<dbReference type="OMA" id="HATAHNH"/>
<dbReference type="OrthoDB" id="200954at2759"/>
<dbReference type="PhylomeDB" id="Q6P5F6"/>
<dbReference type="TreeFam" id="TF318470"/>
<dbReference type="BioGRID-ORCS" id="227059">
    <property type="hits" value="18 hits in 85 CRISPR screens"/>
</dbReference>
<dbReference type="ChiTaRS" id="Slc39a10">
    <property type="organism name" value="mouse"/>
</dbReference>
<dbReference type="PRO" id="PR:Q6P5F6"/>
<dbReference type="Proteomes" id="UP000000589">
    <property type="component" value="Chromosome 1"/>
</dbReference>
<dbReference type="RNAct" id="Q6P5F6">
    <property type="molecule type" value="protein"/>
</dbReference>
<dbReference type="Bgee" id="ENSMUSG00000025986">
    <property type="expression patterns" value="Expressed in brain blood vessel and 245 other cell types or tissues"/>
</dbReference>
<dbReference type="ExpressionAtlas" id="Q6P5F6">
    <property type="expression patterns" value="baseline and differential"/>
</dbReference>
<dbReference type="GO" id="GO:0016324">
    <property type="term" value="C:apical plasma membrane"/>
    <property type="evidence" value="ECO:0000314"/>
    <property type="project" value="UniProtKB"/>
</dbReference>
<dbReference type="GO" id="GO:0005886">
    <property type="term" value="C:plasma membrane"/>
    <property type="evidence" value="ECO:0000314"/>
    <property type="project" value="MGI"/>
</dbReference>
<dbReference type="GO" id="GO:0008160">
    <property type="term" value="F:protein tyrosine phosphatase activator activity"/>
    <property type="evidence" value="ECO:0000315"/>
    <property type="project" value="MGI"/>
</dbReference>
<dbReference type="GO" id="GO:0005385">
    <property type="term" value="F:zinc ion transmembrane transporter activity"/>
    <property type="evidence" value="ECO:0000315"/>
    <property type="project" value="MGI"/>
</dbReference>
<dbReference type="GO" id="GO:0001837">
    <property type="term" value="P:epithelial to mesenchymal transition"/>
    <property type="evidence" value="ECO:0000314"/>
    <property type="project" value="UniProtKB"/>
</dbReference>
<dbReference type="GO" id="GO:0006882">
    <property type="term" value="P:intracellular zinc ion homeostasis"/>
    <property type="evidence" value="ECO:0000315"/>
    <property type="project" value="MGI"/>
</dbReference>
<dbReference type="GO" id="GO:0002903">
    <property type="term" value="P:negative regulation of B cell apoptotic process"/>
    <property type="evidence" value="ECO:0000315"/>
    <property type="project" value="MGI"/>
</dbReference>
<dbReference type="GO" id="GO:0030890">
    <property type="term" value="P:positive regulation of B cell proliferation"/>
    <property type="evidence" value="ECO:0000315"/>
    <property type="project" value="MGI"/>
</dbReference>
<dbReference type="GO" id="GO:0050861">
    <property type="term" value="P:positive regulation of B cell receptor signaling pathway"/>
    <property type="evidence" value="ECO:0000315"/>
    <property type="project" value="MGI"/>
</dbReference>
<dbReference type="GO" id="GO:0071578">
    <property type="term" value="P:zinc ion import across plasma membrane"/>
    <property type="evidence" value="ECO:0000315"/>
    <property type="project" value="MGI"/>
</dbReference>
<dbReference type="GO" id="GO:0071577">
    <property type="term" value="P:zinc ion transmembrane transport"/>
    <property type="evidence" value="ECO:0000250"/>
    <property type="project" value="UniProtKB"/>
</dbReference>
<dbReference type="InterPro" id="IPR003689">
    <property type="entry name" value="ZIP"/>
</dbReference>
<dbReference type="InterPro" id="IPR050799">
    <property type="entry name" value="ZIP_Transporter"/>
</dbReference>
<dbReference type="PANTHER" id="PTHR12191">
    <property type="entry name" value="SOLUTE CARRIER FAMILY 39"/>
    <property type="match status" value="1"/>
</dbReference>
<dbReference type="PANTHER" id="PTHR12191:SF14">
    <property type="entry name" value="ZINC TRANSPORTER ZIP10"/>
    <property type="match status" value="1"/>
</dbReference>
<dbReference type="Pfam" id="PF02535">
    <property type="entry name" value="Zip"/>
    <property type="match status" value="2"/>
</dbReference>